<sequence length="33" mass="3475">MSDINATRLPIWGIGCDPCVGDEVTALLTRGEA</sequence>
<accession>A0A023IWK6</accession>
<proteinExistence type="inferred from homology"/>
<organism>
    <name type="scientific">Amanita phalloides</name>
    <name type="common">Death cap</name>
    <dbReference type="NCBI Taxonomy" id="67723"/>
    <lineage>
        <taxon>Eukaryota</taxon>
        <taxon>Fungi</taxon>
        <taxon>Dikarya</taxon>
        <taxon>Basidiomycota</taxon>
        <taxon>Agaricomycotina</taxon>
        <taxon>Agaricomycetes</taxon>
        <taxon>Agaricomycetidae</taxon>
        <taxon>Agaricales</taxon>
        <taxon>Pluteineae</taxon>
        <taxon>Amanitaceae</taxon>
        <taxon>Amanita</taxon>
    </lineage>
</organism>
<dbReference type="EMBL" id="KF552091">
    <property type="protein sequence ID" value="AHB18719.1"/>
    <property type="molecule type" value="Genomic_DNA"/>
</dbReference>
<dbReference type="GO" id="GO:0090729">
    <property type="term" value="F:toxin activity"/>
    <property type="evidence" value="ECO:0007669"/>
    <property type="project" value="UniProtKB-KW"/>
</dbReference>
<dbReference type="InterPro" id="IPR027582">
    <property type="entry name" value="Amanitin/phalloidin"/>
</dbReference>
<dbReference type="NCBIfam" id="TIGR04309">
    <property type="entry name" value="amanitin"/>
    <property type="match status" value="1"/>
</dbReference>
<dbReference type="Pfam" id="PF24112">
    <property type="entry name" value="Amanitin"/>
    <property type="match status" value="1"/>
</dbReference>
<keyword id="KW-0883">Thioether bond</keyword>
<keyword id="KW-0800">Toxin</keyword>
<reference key="1">
    <citation type="journal article" date="2014" name="Toxicon">
        <title>The molecular diversity of toxin gene families in lethal Amanita mushrooms.</title>
        <authorList>
            <person name="Li P."/>
            <person name="Deng W."/>
            <person name="Li T."/>
        </authorList>
    </citation>
    <scope>NUCLEOTIDE SEQUENCE [GENOMIC DNA]</scope>
    <scope>FUNCTION</scope>
</reference>
<reference key="2">
    <citation type="journal article" date="2002" name="J. Toxicol. Clin. Toxicol.">
        <title>Treatment of amatoxin poisoning: 20-year retrospective analysis.</title>
        <authorList>
            <person name="Enjalbert F."/>
            <person name="Rapior S."/>
            <person name="Nouguier-Soule J."/>
            <person name="Guillon S."/>
            <person name="Amouroux N."/>
            <person name="Cabot C."/>
        </authorList>
    </citation>
    <scope>REVIEW ON TOXICITY</scope>
</reference>
<name>BAMA1_AMAPH</name>
<evidence type="ECO:0000250" key="1">
    <source>
        <dbReference type="UniProtKB" id="A0A067SLB9"/>
    </source>
</evidence>
<evidence type="ECO:0000250" key="2">
    <source>
        <dbReference type="UniProtKB" id="A8W7M4"/>
    </source>
</evidence>
<evidence type="ECO:0000250" key="3">
    <source>
        <dbReference type="UniProtKB" id="P85421"/>
    </source>
</evidence>
<evidence type="ECO:0000303" key="4">
    <source>
    </source>
</evidence>
<evidence type="ECO:0000303" key="5">
    <source>
    </source>
</evidence>
<evidence type="ECO:0000305" key="6"/>
<evidence type="ECO:0000305" key="7">
    <source>
    </source>
</evidence>
<protein>
    <recommendedName>
        <fullName evidence="5">Beta-amanitin proprotein</fullName>
    </recommendedName>
    <component>
        <recommendedName>
            <fullName evidence="5">Beta-amanitin</fullName>
        </recommendedName>
    </component>
</protein>
<comment type="function">
    <text evidence="7">Toxin belonging to the bicyclic octapeptides amatoxins that acts by binding non-competitively to RNA polymerase II and greatly slowing the elongation of transcripts from target promoters (PubMed:24613547).</text>
</comment>
<comment type="PTM">
    <text evidence="1 7">Processed by the macrocyclase-peptidase enzyme POPB to yield a toxic cyclic decapeptide (PubMed:24613547). POPB first removes 10 residues from the N-terminus (By similarity). Conformational trapping of the remaining peptide forces the enzyme to release this intermediate rather than proceed to macrocyclization (By similarity). The enzyme rebinds the remaining peptide in a different conformation and catalyzes macrocyclization of the N-terminal 8 residues (By similarity).</text>
</comment>
<comment type="miscellaneous">
    <text evidence="4">The typical symptoms of amatoxin poisoning are gastro-intestinal distress beginning 6-12 hours after ingestion, a remission phase lasting 12-24 hours, and progressive loss of liver function culminating in death within 3-5 days (PubMed:12475187). One of the few effective treatments is liver transplantation (PubMed:12475187).</text>
</comment>
<comment type="similarity">
    <text evidence="6">Belongs to the MSDIN fungal toxin family.</text>
</comment>
<feature type="propeptide" id="PRO_0000443587" evidence="2">
    <location>
        <begin position="1"/>
        <end position="10"/>
    </location>
</feature>
<feature type="peptide" id="PRO_0000443588" description="Beta-amanitin" evidence="2">
    <location>
        <begin position="11"/>
        <end position="18"/>
    </location>
</feature>
<feature type="propeptide" id="PRO_0000443589" evidence="2">
    <location>
        <begin position="19"/>
        <end position="33"/>
    </location>
</feature>
<feature type="cross-link" description="Cyclopeptide (Ile-Pro)" evidence="2">
    <location>
        <begin position="11"/>
        <end position="18"/>
    </location>
</feature>
<feature type="cross-link" description="2'-cysteinyl-6'-hydroxytryptophan sulfoxide (Trp-Cys)" evidence="3">
    <location>
        <begin position="12"/>
        <end position="16"/>
    </location>
</feature>